<proteinExistence type="inferred from homology"/>
<gene>
    <name evidence="1" type="primary">thyA</name>
    <name type="ordered locus">Pnuc_0381</name>
</gene>
<organism>
    <name type="scientific">Polynucleobacter asymbioticus (strain DSM 18221 / CIP 109841 / QLW-P1DMWA-1)</name>
    <name type="common">Polynucleobacter necessarius subsp. asymbioticus</name>
    <dbReference type="NCBI Taxonomy" id="312153"/>
    <lineage>
        <taxon>Bacteria</taxon>
        <taxon>Pseudomonadati</taxon>
        <taxon>Pseudomonadota</taxon>
        <taxon>Betaproteobacteria</taxon>
        <taxon>Burkholderiales</taxon>
        <taxon>Burkholderiaceae</taxon>
        <taxon>Polynucleobacter</taxon>
    </lineage>
</organism>
<dbReference type="EC" id="2.1.1.45" evidence="1"/>
<dbReference type="EMBL" id="CP000655">
    <property type="protein sequence ID" value="ABP33601.1"/>
    <property type="molecule type" value="Genomic_DNA"/>
</dbReference>
<dbReference type="RefSeq" id="WP_011902226.1">
    <property type="nucleotide sequence ID" value="NC_009379.1"/>
</dbReference>
<dbReference type="SMR" id="A4SVT7"/>
<dbReference type="GeneID" id="31480732"/>
<dbReference type="KEGG" id="pnu:Pnuc_0381"/>
<dbReference type="eggNOG" id="COG0207">
    <property type="taxonomic scope" value="Bacteria"/>
</dbReference>
<dbReference type="HOGENOM" id="CLU_021669_0_0_4"/>
<dbReference type="UniPathway" id="UPA00575"/>
<dbReference type="Proteomes" id="UP000000231">
    <property type="component" value="Chromosome"/>
</dbReference>
<dbReference type="GO" id="GO:0005829">
    <property type="term" value="C:cytosol"/>
    <property type="evidence" value="ECO:0007669"/>
    <property type="project" value="TreeGrafter"/>
</dbReference>
<dbReference type="GO" id="GO:0004799">
    <property type="term" value="F:thymidylate synthase activity"/>
    <property type="evidence" value="ECO:0007669"/>
    <property type="project" value="UniProtKB-UniRule"/>
</dbReference>
<dbReference type="GO" id="GO:0006231">
    <property type="term" value="P:dTMP biosynthetic process"/>
    <property type="evidence" value="ECO:0007669"/>
    <property type="project" value="UniProtKB-UniRule"/>
</dbReference>
<dbReference type="GO" id="GO:0006235">
    <property type="term" value="P:dTTP biosynthetic process"/>
    <property type="evidence" value="ECO:0007669"/>
    <property type="project" value="UniProtKB-UniRule"/>
</dbReference>
<dbReference type="GO" id="GO:0032259">
    <property type="term" value="P:methylation"/>
    <property type="evidence" value="ECO:0007669"/>
    <property type="project" value="UniProtKB-KW"/>
</dbReference>
<dbReference type="CDD" id="cd00351">
    <property type="entry name" value="TS_Pyrimidine_HMase"/>
    <property type="match status" value="1"/>
</dbReference>
<dbReference type="FunFam" id="3.30.572.10:FF:000001">
    <property type="entry name" value="Thymidylate synthase"/>
    <property type="match status" value="1"/>
</dbReference>
<dbReference type="Gene3D" id="3.30.572.10">
    <property type="entry name" value="Thymidylate synthase/dCMP hydroxymethylase domain"/>
    <property type="match status" value="1"/>
</dbReference>
<dbReference type="HAMAP" id="MF_00008">
    <property type="entry name" value="Thymidy_synth_bact"/>
    <property type="match status" value="1"/>
</dbReference>
<dbReference type="InterPro" id="IPR045097">
    <property type="entry name" value="Thymidate_synth/dCMP_Mease"/>
</dbReference>
<dbReference type="InterPro" id="IPR023451">
    <property type="entry name" value="Thymidate_synth/dCMP_Mease_dom"/>
</dbReference>
<dbReference type="InterPro" id="IPR036926">
    <property type="entry name" value="Thymidate_synth/dCMP_Mease_sf"/>
</dbReference>
<dbReference type="InterPro" id="IPR000398">
    <property type="entry name" value="Thymidylate_synthase"/>
</dbReference>
<dbReference type="InterPro" id="IPR020940">
    <property type="entry name" value="Thymidylate_synthase_AS"/>
</dbReference>
<dbReference type="NCBIfam" id="NF002497">
    <property type="entry name" value="PRK01827.1-3"/>
    <property type="match status" value="1"/>
</dbReference>
<dbReference type="NCBIfam" id="NF002499">
    <property type="entry name" value="PRK01827.1-5"/>
    <property type="match status" value="1"/>
</dbReference>
<dbReference type="NCBIfam" id="TIGR03284">
    <property type="entry name" value="thym_sym"/>
    <property type="match status" value="2"/>
</dbReference>
<dbReference type="PANTHER" id="PTHR11548:SF9">
    <property type="entry name" value="THYMIDYLATE SYNTHASE"/>
    <property type="match status" value="1"/>
</dbReference>
<dbReference type="PANTHER" id="PTHR11548">
    <property type="entry name" value="THYMIDYLATE SYNTHASE 1"/>
    <property type="match status" value="1"/>
</dbReference>
<dbReference type="Pfam" id="PF00303">
    <property type="entry name" value="Thymidylat_synt"/>
    <property type="match status" value="1"/>
</dbReference>
<dbReference type="PRINTS" id="PR00108">
    <property type="entry name" value="THYMDSNTHASE"/>
</dbReference>
<dbReference type="SUPFAM" id="SSF55831">
    <property type="entry name" value="Thymidylate synthase/dCMP hydroxymethylase"/>
    <property type="match status" value="1"/>
</dbReference>
<dbReference type="PROSITE" id="PS00091">
    <property type="entry name" value="THYMIDYLATE_SYNTHASE"/>
    <property type="match status" value="1"/>
</dbReference>
<keyword id="KW-0963">Cytoplasm</keyword>
<keyword id="KW-0489">Methyltransferase</keyword>
<keyword id="KW-0545">Nucleotide biosynthesis</keyword>
<keyword id="KW-1185">Reference proteome</keyword>
<keyword id="KW-0808">Transferase</keyword>
<name>TYSY_POLAQ</name>
<comment type="function">
    <text evidence="1">Catalyzes the reductive methylation of 2'-deoxyuridine-5'-monophosphate (dUMP) to 2'-deoxythymidine-5'-monophosphate (dTMP) while utilizing 5,10-methylenetetrahydrofolate (mTHF) as the methyl donor and reductant in the reaction, yielding dihydrofolate (DHF) as a by-product. This enzymatic reaction provides an intracellular de novo source of dTMP, an essential precursor for DNA biosynthesis.</text>
</comment>
<comment type="catalytic activity">
    <reaction evidence="1">
        <text>dUMP + (6R)-5,10-methylene-5,6,7,8-tetrahydrofolate = 7,8-dihydrofolate + dTMP</text>
        <dbReference type="Rhea" id="RHEA:12104"/>
        <dbReference type="ChEBI" id="CHEBI:15636"/>
        <dbReference type="ChEBI" id="CHEBI:57451"/>
        <dbReference type="ChEBI" id="CHEBI:63528"/>
        <dbReference type="ChEBI" id="CHEBI:246422"/>
        <dbReference type="EC" id="2.1.1.45"/>
    </reaction>
</comment>
<comment type="pathway">
    <text evidence="1">Pyrimidine metabolism; dTTP biosynthesis.</text>
</comment>
<comment type="subunit">
    <text evidence="1">Homodimer.</text>
</comment>
<comment type="subcellular location">
    <subcellularLocation>
        <location evidence="1">Cytoplasm</location>
    </subcellularLocation>
</comment>
<comment type="similarity">
    <text evidence="1">Belongs to the thymidylate synthase family. Bacterial-type ThyA subfamily.</text>
</comment>
<feature type="chain" id="PRO_1000073880" description="Thymidylate synthase">
    <location>
        <begin position="1"/>
        <end position="264"/>
    </location>
</feature>
<feature type="active site" description="Nucleophile" evidence="1">
    <location>
        <position position="146"/>
    </location>
</feature>
<feature type="binding site" description="in other chain" evidence="1">
    <location>
        <position position="21"/>
    </location>
    <ligand>
        <name>dUMP</name>
        <dbReference type="ChEBI" id="CHEBI:246422"/>
        <note>ligand shared between dimeric partners</note>
    </ligand>
</feature>
<feature type="binding site" evidence="1">
    <location>
        <position position="51"/>
    </location>
    <ligand>
        <name>(6R)-5,10-methylene-5,6,7,8-tetrahydrofolate</name>
        <dbReference type="ChEBI" id="CHEBI:15636"/>
    </ligand>
</feature>
<feature type="binding site" evidence="1">
    <location>
        <begin position="126"/>
        <end position="127"/>
    </location>
    <ligand>
        <name>dUMP</name>
        <dbReference type="ChEBI" id="CHEBI:246422"/>
        <note>ligand shared between dimeric partners</note>
    </ligand>
</feature>
<feature type="binding site" description="in other chain" evidence="1">
    <location>
        <begin position="166"/>
        <end position="169"/>
    </location>
    <ligand>
        <name>dUMP</name>
        <dbReference type="ChEBI" id="CHEBI:246422"/>
        <note>ligand shared between dimeric partners</note>
    </ligand>
</feature>
<feature type="binding site" evidence="1">
    <location>
        <position position="169"/>
    </location>
    <ligand>
        <name>(6R)-5,10-methylene-5,6,7,8-tetrahydrofolate</name>
        <dbReference type="ChEBI" id="CHEBI:15636"/>
    </ligand>
</feature>
<feature type="binding site" description="in other chain" evidence="1">
    <location>
        <position position="177"/>
    </location>
    <ligand>
        <name>dUMP</name>
        <dbReference type="ChEBI" id="CHEBI:246422"/>
        <note>ligand shared between dimeric partners</note>
    </ligand>
</feature>
<feature type="binding site" description="in other chain" evidence="1">
    <location>
        <begin position="207"/>
        <end position="209"/>
    </location>
    <ligand>
        <name>dUMP</name>
        <dbReference type="ChEBI" id="CHEBI:246422"/>
        <note>ligand shared between dimeric partners</note>
    </ligand>
</feature>
<feature type="binding site" evidence="1">
    <location>
        <position position="263"/>
    </location>
    <ligand>
        <name>(6R)-5,10-methylene-5,6,7,8-tetrahydrofolate</name>
        <dbReference type="ChEBI" id="CHEBI:15636"/>
    </ligand>
</feature>
<sequence length="264" mass="30235">MRQYHNLMKEVLAKGVQKSDRTGTGTISVFGHQMRFNLADGFPMVTTKKLHMKSIVYELLWFLKGSTDNNWLKERGVSIWNEWAAPDGDLGPIYGYQWRSWPAPNGQHIDQISEVVETIKKNPDSRRIIVSAWNVADIPRMALAPCHAFFQFYVADGKLSCQLYQRSADIFLGVPFNIASYALLTHMVAQQCNLEVGDFIWTGGDCHLYSNHLEQVDLQLSRDFLPLPKLNILRKPDSLFDYEFEDFEIVGYESHPHIKAPVAI</sequence>
<reference key="1">
    <citation type="journal article" date="2012" name="Stand. Genomic Sci.">
        <title>Complete genome sequence of Polynucleobacter necessarius subsp. asymbioticus type strain (QLW-P1DMWA-1(T)).</title>
        <authorList>
            <person name="Meincke L."/>
            <person name="Copeland A."/>
            <person name="Lapidus A."/>
            <person name="Lucas S."/>
            <person name="Berry K.W."/>
            <person name="Del Rio T.G."/>
            <person name="Hammon N."/>
            <person name="Dalin E."/>
            <person name="Tice H."/>
            <person name="Pitluck S."/>
            <person name="Richardson P."/>
            <person name="Bruce D."/>
            <person name="Goodwin L."/>
            <person name="Han C."/>
            <person name="Tapia R."/>
            <person name="Detter J.C."/>
            <person name="Schmutz J."/>
            <person name="Brettin T."/>
            <person name="Larimer F."/>
            <person name="Land M."/>
            <person name="Hauser L."/>
            <person name="Kyrpides N.C."/>
            <person name="Ivanova N."/>
            <person name="Goker M."/>
            <person name="Woyke T."/>
            <person name="Wu Q.L."/>
            <person name="Pockl M."/>
            <person name="Hahn M.W."/>
            <person name="Klenk H.P."/>
        </authorList>
    </citation>
    <scope>NUCLEOTIDE SEQUENCE [LARGE SCALE GENOMIC DNA]</scope>
    <source>
        <strain>DSM 18221 / CIP 109841 / QLW-P1DMWA-1</strain>
    </source>
</reference>
<accession>A4SVT7</accession>
<evidence type="ECO:0000255" key="1">
    <source>
        <dbReference type="HAMAP-Rule" id="MF_00008"/>
    </source>
</evidence>
<protein>
    <recommendedName>
        <fullName evidence="1">Thymidylate synthase</fullName>
        <shortName evidence="1">TS</shortName>
        <shortName evidence="1">TSase</shortName>
        <ecNumber evidence="1">2.1.1.45</ecNumber>
    </recommendedName>
</protein>